<name>ISPH_ACIC1</name>
<protein>
    <recommendedName>
        <fullName evidence="1">4-hydroxy-3-methylbut-2-enyl diphosphate reductase</fullName>
        <shortName evidence="1">HMBPP reductase</shortName>
        <ecNumber evidence="1">1.17.7.4</ecNumber>
    </recommendedName>
</protein>
<comment type="function">
    <text evidence="1">Catalyzes the conversion of 1-hydroxy-2-methyl-2-(E)-butenyl 4-diphosphate (HMBPP) into a mixture of isopentenyl diphosphate (IPP) and dimethylallyl diphosphate (DMAPP). Acts in the terminal step of the DOXP/MEP pathway for isoprenoid precursor biosynthesis.</text>
</comment>
<comment type="catalytic activity">
    <reaction evidence="1">
        <text>isopentenyl diphosphate + 2 oxidized [2Fe-2S]-[ferredoxin] + H2O = (2E)-4-hydroxy-3-methylbut-2-enyl diphosphate + 2 reduced [2Fe-2S]-[ferredoxin] + 2 H(+)</text>
        <dbReference type="Rhea" id="RHEA:24488"/>
        <dbReference type="Rhea" id="RHEA-COMP:10000"/>
        <dbReference type="Rhea" id="RHEA-COMP:10001"/>
        <dbReference type="ChEBI" id="CHEBI:15377"/>
        <dbReference type="ChEBI" id="CHEBI:15378"/>
        <dbReference type="ChEBI" id="CHEBI:33737"/>
        <dbReference type="ChEBI" id="CHEBI:33738"/>
        <dbReference type="ChEBI" id="CHEBI:128753"/>
        <dbReference type="ChEBI" id="CHEBI:128769"/>
        <dbReference type="EC" id="1.17.7.4"/>
    </reaction>
</comment>
<comment type="catalytic activity">
    <reaction evidence="1">
        <text>dimethylallyl diphosphate + 2 oxidized [2Fe-2S]-[ferredoxin] + H2O = (2E)-4-hydroxy-3-methylbut-2-enyl diphosphate + 2 reduced [2Fe-2S]-[ferredoxin] + 2 H(+)</text>
        <dbReference type="Rhea" id="RHEA:24825"/>
        <dbReference type="Rhea" id="RHEA-COMP:10000"/>
        <dbReference type="Rhea" id="RHEA-COMP:10001"/>
        <dbReference type="ChEBI" id="CHEBI:15377"/>
        <dbReference type="ChEBI" id="CHEBI:15378"/>
        <dbReference type="ChEBI" id="CHEBI:33737"/>
        <dbReference type="ChEBI" id="CHEBI:33738"/>
        <dbReference type="ChEBI" id="CHEBI:57623"/>
        <dbReference type="ChEBI" id="CHEBI:128753"/>
        <dbReference type="EC" id="1.17.7.4"/>
    </reaction>
</comment>
<comment type="cofactor">
    <cofactor evidence="1">
        <name>[4Fe-4S] cluster</name>
        <dbReference type="ChEBI" id="CHEBI:49883"/>
    </cofactor>
    <text evidence="1">Binds 1 [4Fe-4S] cluster per subunit.</text>
</comment>
<comment type="pathway">
    <text evidence="1">Isoprenoid biosynthesis; dimethylallyl diphosphate biosynthesis; dimethylallyl diphosphate from (2E)-4-hydroxy-3-methylbutenyl diphosphate: step 1/1.</text>
</comment>
<comment type="pathway">
    <text evidence="1">Isoprenoid biosynthesis; isopentenyl diphosphate biosynthesis via DXP pathway; isopentenyl diphosphate from 1-deoxy-D-xylulose 5-phosphate: step 6/6.</text>
</comment>
<comment type="similarity">
    <text evidence="1">Belongs to the IspH family.</text>
</comment>
<accession>A0LW20</accession>
<feature type="chain" id="PRO_1000077511" description="4-hydroxy-3-methylbut-2-enyl diphosphate reductase">
    <location>
        <begin position="1"/>
        <end position="340"/>
    </location>
</feature>
<feature type="region of interest" description="Disordered" evidence="2">
    <location>
        <begin position="320"/>
        <end position="340"/>
    </location>
</feature>
<feature type="active site" description="Proton donor" evidence="1">
    <location>
        <position position="135"/>
    </location>
</feature>
<feature type="binding site" evidence="1">
    <location>
        <position position="21"/>
    </location>
    <ligand>
        <name>[4Fe-4S] cluster</name>
        <dbReference type="ChEBI" id="CHEBI:49883"/>
    </ligand>
</feature>
<feature type="binding site" evidence="1">
    <location>
        <position position="50"/>
    </location>
    <ligand>
        <name>(2E)-4-hydroxy-3-methylbut-2-enyl diphosphate</name>
        <dbReference type="ChEBI" id="CHEBI:128753"/>
    </ligand>
</feature>
<feature type="binding site" evidence="1">
    <location>
        <position position="50"/>
    </location>
    <ligand>
        <name>dimethylallyl diphosphate</name>
        <dbReference type="ChEBI" id="CHEBI:57623"/>
    </ligand>
</feature>
<feature type="binding site" evidence="1">
    <location>
        <position position="50"/>
    </location>
    <ligand>
        <name>isopentenyl diphosphate</name>
        <dbReference type="ChEBI" id="CHEBI:128769"/>
    </ligand>
</feature>
<feature type="binding site" evidence="1">
    <location>
        <position position="83"/>
    </location>
    <ligand>
        <name>(2E)-4-hydroxy-3-methylbut-2-enyl diphosphate</name>
        <dbReference type="ChEBI" id="CHEBI:128753"/>
    </ligand>
</feature>
<feature type="binding site" evidence="1">
    <location>
        <position position="83"/>
    </location>
    <ligand>
        <name>dimethylallyl diphosphate</name>
        <dbReference type="ChEBI" id="CHEBI:57623"/>
    </ligand>
</feature>
<feature type="binding site" evidence="1">
    <location>
        <position position="83"/>
    </location>
    <ligand>
        <name>isopentenyl diphosphate</name>
        <dbReference type="ChEBI" id="CHEBI:128769"/>
    </ligand>
</feature>
<feature type="binding site" evidence="1">
    <location>
        <position position="105"/>
    </location>
    <ligand>
        <name>[4Fe-4S] cluster</name>
        <dbReference type="ChEBI" id="CHEBI:49883"/>
    </ligand>
</feature>
<feature type="binding site" evidence="1">
    <location>
        <position position="133"/>
    </location>
    <ligand>
        <name>(2E)-4-hydroxy-3-methylbut-2-enyl diphosphate</name>
        <dbReference type="ChEBI" id="CHEBI:128753"/>
    </ligand>
</feature>
<feature type="binding site" evidence="1">
    <location>
        <position position="133"/>
    </location>
    <ligand>
        <name>dimethylallyl diphosphate</name>
        <dbReference type="ChEBI" id="CHEBI:57623"/>
    </ligand>
</feature>
<feature type="binding site" evidence="1">
    <location>
        <position position="133"/>
    </location>
    <ligand>
        <name>isopentenyl diphosphate</name>
        <dbReference type="ChEBI" id="CHEBI:128769"/>
    </ligand>
</feature>
<feature type="binding site" evidence="1">
    <location>
        <position position="173"/>
    </location>
    <ligand>
        <name>(2E)-4-hydroxy-3-methylbut-2-enyl diphosphate</name>
        <dbReference type="ChEBI" id="CHEBI:128753"/>
    </ligand>
</feature>
<feature type="binding site" evidence="1">
    <location>
        <position position="203"/>
    </location>
    <ligand>
        <name>[4Fe-4S] cluster</name>
        <dbReference type="ChEBI" id="CHEBI:49883"/>
    </ligand>
</feature>
<feature type="binding site" evidence="1">
    <location>
        <position position="231"/>
    </location>
    <ligand>
        <name>(2E)-4-hydroxy-3-methylbut-2-enyl diphosphate</name>
        <dbReference type="ChEBI" id="CHEBI:128753"/>
    </ligand>
</feature>
<feature type="binding site" evidence="1">
    <location>
        <position position="231"/>
    </location>
    <ligand>
        <name>dimethylallyl diphosphate</name>
        <dbReference type="ChEBI" id="CHEBI:57623"/>
    </ligand>
</feature>
<feature type="binding site" evidence="1">
    <location>
        <position position="231"/>
    </location>
    <ligand>
        <name>isopentenyl diphosphate</name>
        <dbReference type="ChEBI" id="CHEBI:128769"/>
    </ligand>
</feature>
<feature type="binding site" evidence="1">
    <location>
        <position position="232"/>
    </location>
    <ligand>
        <name>(2E)-4-hydroxy-3-methylbut-2-enyl diphosphate</name>
        <dbReference type="ChEBI" id="CHEBI:128753"/>
    </ligand>
</feature>
<feature type="binding site" evidence="1">
    <location>
        <position position="232"/>
    </location>
    <ligand>
        <name>dimethylallyl diphosphate</name>
        <dbReference type="ChEBI" id="CHEBI:57623"/>
    </ligand>
</feature>
<feature type="binding site" evidence="1">
    <location>
        <position position="232"/>
    </location>
    <ligand>
        <name>isopentenyl diphosphate</name>
        <dbReference type="ChEBI" id="CHEBI:128769"/>
    </ligand>
</feature>
<feature type="binding site" evidence="1">
    <location>
        <position position="233"/>
    </location>
    <ligand>
        <name>(2E)-4-hydroxy-3-methylbut-2-enyl diphosphate</name>
        <dbReference type="ChEBI" id="CHEBI:128753"/>
    </ligand>
</feature>
<feature type="binding site" evidence="1">
    <location>
        <position position="233"/>
    </location>
    <ligand>
        <name>dimethylallyl diphosphate</name>
        <dbReference type="ChEBI" id="CHEBI:57623"/>
    </ligand>
</feature>
<feature type="binding site" evidence="1">
    <location>
        <position position="233"/>
    </location>
    <ligand>
        <name>isopentenyl diphosphate</name>
        <dbReference type="ChEBI" id="CHEBI:128769"/>
    </ligand>
</feature>
<feature type="binding site" evidence="1">
    <location>
        <position position="276"/>
    </location>
    <ligand>
        <name>(2E)-4-hydroxy-3-methylbut-2-enyl diphosphate</name>
        <dbReference type="ChEBI" id="CHEBI:128753"/>
    </ligand>
</feature>
<feature type="binding site" evidence="1">
    <location>
        <position position="276"/>
    </location>
    <ligand>
        <name>dimethylallyl diphosphate</name>
        <dbReference type="ChEBI" id="CHEBI:57623"/>
    </ligand>
</feature>
<feature type="binding site" evidence="1">
    <location>
        <position position="276"/>
    </location>
    <ligand>
        <name>isopentenyl diphosphate</name>
        <dbReference type="ChEBI" id="CHEBI:128769"/>
    </ligand>
</feature>
<sequence length="340" mass="37114">MTEAPPLPKRRVLLAQPRGYCAGVERAVDTVEKALELYGPPVYVRKQIVHNKHVVAELEAKGAIFVEEADEVPEGSIVVLSAHGVAPSVYEQARQRRLKTIDATCPLVTKVHQEARRFAEQGLEILLIGHANHEEVVGTTGEAPSSITLVDGPEEAEHVQVKDPSRVAWLSQTTLSVDETLQTVEVLRRRFPQLIDPPSDDICYATQNRQAAVKRIAAIADLVIVVGSRNSSNSARLVEVALDSGAKASYLVDDASEIDERWLDGVWTVGVTSGASVPESLVTGVLAWLAERGFDTVEEIDAERETLVFALPPELRRELKARGEPLTRSATAGDRMNADR</sequence>
<reference key="1">
    <citation type="journal article" date="2009" name="Genome Res.">
        <title>Complete genome of the cellulolytic thermophile Acidothermus cellulolyticus 11B provides insights into its ecophysiological and evolutionary adaptations.</title>
        <authorList>
            <person name="Barabote R.D."/>
            <person name="Xie G."/>
            <person name="Leu D.H."/>
            <person name="Normand P."/>
            <person name="Necsulea A."/>
            <person name="Daubin V."/>
            <person name="Medigue C."/>
            <person name="Adney W.S."/>
            <person name="Xu X.C."/>
            <person name="Lapidus A."/>
            <person name="Parales R.E."/>
            <person name="Detter C."/>
            <person name="Pujic P."/>
            <person name="Bruce D."/>
            <person name="Lavire C."/>
            <person name="Challacombe J.F."/>
            <person name="Brettin T.S."/>
            <person name="Berry A.M."/>
        </authorList>
    </citation>
    <scope>NUCLEOTIDE SEQUENCE [LARGE SCALE GENOMIC DNA]</scope>
    <source>
        <strain>ATCC 43068 / DSM 8971 / 11B</strain>
    </source>
</reference>
<evidence type="ECO:0000255" key="1">
    <source>
        <dbReference type="HAMAP-Rule" id="MF_00191"/>
    </source>
</evidence>
<evidence type="ECO:0000256" key="2">
    <source>
        <dbReference type="SAM" id="MobiDB-lite"/>
    </source>
</evidence>
<proteinExistence type="inferred from homology"/>
<dbReference type="EC" id="1.17.7.4" evidence="1"/>
<dbReference type="EMBL" id="CP000481">
    <property type="protein sequence ID" value="ABK53630.1"/>
    <property type="molecule type" value="Genomic_DNA"/>
</dbReference>
<dbReference type="RefSeq" id="WP_011720693.1">
    <property type="nucleotide sequence ID" value="NC_008578.1"/>
</dbReference>
<dbReference type="SMR" id="A0LW20"/>
<dbReference type="FunCoup" id="A0LW20">
    <property type="interactions" value="123"/>
</dbReference>
<dbReference type="STRING" id="351607.Acel_1858"/>
<dbReference type="KEGG" id="ace:Acel_1858"/>
<dbReference type="eggNOG" id="COG0761">
    <property type="taxonomic scope" value="Bacteria"/>
</dbReference>
<dbReference type="HOGENOM" id="CLU_027486_1_0_11"/>
<dbReference type="InParanoid" id="A0LW20"/>
<dbReference type="OrthoDB" id="9804068at2"/>
<dbReference type="UniPathway" id="UPA00056">
    <property type="reaction ID" value="UER00097"/>
</dbReference>
<dbReference type="UniPathway" id="UPA00059">
    <property type="reaction ID" value="UER00105"/>
</dbReference>
<dbReference type="Proteomes" id="UP000008221">
    <property type="component" value="Chromosome"/>
</dbReference>
<dbReference type="GO" id="GO:0051539">
    <property type="term" value="F:4 iron, 4 sulfur cluster binding"/>
    <property type="evidence" value="ECO:0007669"/>
    <property type="project" value="UniProtKB-UniRule"/>
</dbReference>
<dbReference type="GO" id="GO:0051745">
    <property type="term" value="F:4-hydroxy-3-methylbut-2-enyl diphosphate reductase activity"/>
    <property type="evidence" value="ECO:0007669"/>
    <property type="project" value="UniProtKB-UniRule"/>
</dbReference>
<dbReference type="GO" id="GO:0046872">
    <property type="term" value="F:metal ion binding"/>
    <property type="evidence" value="ECO:0007669"/>
    <property type="project" value="UniProtKB-KW"/>
</dbReference>
<dbReference type="GO" id="GO:0050992">
    <property type="term" value="P:dimethylallyl diphosphate biosynthetic process"/>
    <property type="evidence" value="ECO:0007669"/>
    <property type="project" value="UniProtKB-UniRule"/>
</dbReference>
<dbReference type="GO" id="GO:0019288">
    <property type="term" value="P:isopentenyl diphosphate biosynthetic process, methylerythritol 4-phosphate pathway"/>
    <property type="evidence" value="ECO:0007669"/>
    <property type="project" value="UniProtKB-UniRule"/>
</dbReference>
<dbReference type="GO" id="GO:0016114">
    <property type="term" value="P:terpenoid biosynthetic process"/>
    <property type="evidence" value="ECO:0007669"/>
    <property type="project" value="UniProtKB-UniRule"/>
</dbReference>
<dbReference type="CDD" id="cd13944">
    <property type="entry name" value="lytB_ispH"/>
    <property type="match status" value="1"/>
</dbReference>
<dbReference type="Gene3D" id="3.40.50.11270">
    <property type="match status" value="1"/>
</dbReference>
<dbReference type="Gene3D" id="3.40.1010.20">
    <property type="entry name" value="4-hydroxy-3-methylbut-2-enyl diphosphate reductase, catalytic domain"/>
    <property type="match status" value="2"/>
</dbReference>
<dbReference type="HAMAP" id="MF_00191">
    <property type="entry name" value="IspH"/>
    <property type="match status" value="1"/>
</dbReference>
<dbReference type="InterPro" id="IPR003451">
    <property type="entry name" value="LytB/IspH"/>
</dbReference>
<dbReference type="NCBIfam" id="TIGR00216">
    <property type="entry name" value="ispH_lytB"/>
    <property type="match status" value="1"/>
</dbReference>
<dbReference type="NCBIfam" id="NF002189">
    <property type="entry name" value="PRK01045.1-3"/>
    <property type="match status" value="1"/>
</dbReference>
<dbReference type="NCBIfam" id="NF002190">
    <property type="entry name" value="PRK01045.1-4"/>
    <property type="match status" value="1"/>
</dbReference>
<dbReference type="Pfam" id="PF02401">
    <property type="entry name" value="LYTB"/>
    <property type="match status" value="1"/>
</dbReference>
<keyword id="KW-0004">4Fe-4S</keyword>
<keyword id="KW-0408">Iron</keyword>
<keyword id="KW-0411">Iron-sulfur</keyword>
<keyword id="KW-0414">Isoprene biosynthesis</keyword>
<keyword id="KW-0479">Metal-binding</keyword>
<keyword id="KW-0560">Oxidoreductase</keyword>
<keyword id="KW-1185">Reference proteome</keyword>
<organism>
    <name type="scientific">Acidothermus cellulolyticus (strain ATCC 43068 / DSM 8971 / 11B)</name>
    <dbReference type="NCBI Taxonomy" id="351607"/>
    <lineage>
        <taxon>Bacteria</taxon>
        <taxon>Bacillati</taxon>
        <taxon>Actinomycetota</taxon>
        <taxon>Actinomycetes</taxon>
        <taxon>Acidothermales</taxon>
        <taxon>Acidothermaceae</taxon>
        <taxon>Acidothermus</taxon>
    </lineage>
</organism>
<gene>
    <name evidence="1" type="primary">ispH</name>
    <name type="ordered locus">Acel_1858</name>
</gene>